<accession>Q8KEZ7</accession>
<keyword id="KW-0028">Amino-acid biosynthesis</keyword>
<keyword id="KW-0057">Aromatic amino acid biosynthesis</keyword>
<keyword id="KW-0456">Lyase</keyword>
<keyword id="KW-1185">Reference proteome</keyword>
<keyword id="KW-0822">Tryptophan biosynthesis</keyword>
<protein>
    <recommendedName>
        <fullName evidence="1">Tryptophan synthase alpha chain</fullName>
        <ecNumber evidence="1">4.2.1.20</ecNumber>
    </recommendedName>
</protein>
<dbReference type="EC" id="4.2.1.20" evidence="1"/>
<dbReference type="EMBL" id="AE006470">
    <property type="protein sequence ID" value="AAM71777.1"/>
    <property type="molecule type" value="Genomic_DNA"/>
</dbReference>
<dbReference type="RefSeq" id="NP_661435.1">
    <property type="nucleotide sequence ID" value="NC_002932.3"/>
</dbReference>
<dbReference type="RefSeq" id="WP_010932222.1">
    <property type="nucleotide sequence ID" value="NC_002932.3"/>
</dbReference>
<dbReference type="SMR" id="Q8KEZ7"/>
<dbReference type="STRING" id="194439.CT0535"/>
<dbReference type="EnsemblBacteria" id="AAM71777">
    <property type="protein sequence ID" value="AAM71777"/>
    <property type="gene ID" value="CT0535"/>
</dbReference>
<dbReference type="KEGG" id="cte:CT0535"/>
<dbReference type="PATRIC" id="fig|194439.7.peg.502"/>
<dbReference type="eggNOG" id="COG0159">
    <property type="taxonomic scope" value="Bacteria"/>
</dbReference>
<dbReference type="HOGENOM" id="CLU_016734_0_0_10"/>
<dbReference type="OrthoDB" id="9804578at2"/>
<dbReference type="UniPathway" id="UPA00035">
    <property type="reaction ID" value="UER00044"/>
</dbReference>
<dbReference type="Proteomes" id="UP000001007">
    <property type="component" value="Chromosome"/>
</dbReference>
<dbReference type="GO" id="GO:0005829">
    <property type="term" value="C:cytosol"/>
    <property type="evidence" value="ECO:0007669"/>
    <property type="project" value="TreeGrafter"/>
</dbReference>
<dbReference type="GO" id="GO:0004834">
    <property type="term" value="F:tryptophan synthase activity"/>
    <property type="evidence" value="ECO:0007669"/>
    <property type="project" value="UniProtKB-UniRule"/>
</dbReference>
<dbReference type="CDD" id="cd04724">
    <property type="entry name" value="Tryptophan_synthase_alpha"/>
    <property type="match status" value="1"/>
</dbReference>
<dbReference type="Gene3D" id="3.20.20.70">
    <property type="entry name" value="Aldolase class I"/>
    <property type="match status" value="1"/>
</dbReference>
<dbReference type="HAMAP" id="MF_00131">
    <property type="entry name" value="Trp_synth_alpha"/>
    <property type="match status" value="1"/>
</dbReference>
<dbReference type="InterPro" id="IPR013785">
    <property type="entry name" value="Aldolase_TIM"/>
</dbReference>
<dbReference type="InterPro" id="IPR011060">
    <property type="entry name" value="RibuloseP-bd_barrel"/>
</dbReference>
<dbReference type="InterPro" id="IPR018204">
    <property type="entry name" value="Trp_synthase_alpha_AS"/>
</dbReference>
<dbReference type="InterPro" id="IPR002028">
    <property type="entry name" value="Trp_synthase_suA"/>
</dbReference>
<dbReference type="NCBIfam" id="TIGR00262">
    <property type="entry name" value="trpA"/>
    <property type="match status" value="1"/>
</dbReference>
<dbReference type="PANTHER" id="PTHR43406:SF1">
    <property type="entry name" value="TRYPTOPHAN SYNTHASE ALPHA CHAIN, CHLOROPLASTIC"/>
    <property type="match status" value="1"/>
</dbReference>
<dbReference type="PANTHER" id="PTHR43406">
    <property type="entry name" value="TRYPTOPHAN SYNTHASE, ALPHA CHAIN"/>
    <property type="match status" value="1"/>
</dbReference>
<dbReference type="Pfam" id="PF00290">
    <property type="entry name" value="Trp_syntA"/>
    <property type="match status" value="1"/>
</dbReference>
<dbReference type="SUPFAM" id="SSF51366">
    <property type="entry name" value="Ribulose-phoshate binding barrel"/>
    <property type="match status" value="1"/>
</dbReference>
<dbReference type="PROSITE" id="PS00167">
    <property type="entry name" value="TRP_SYNTHASE_ALPHA"/>
    <property type="match status" value="1"/>
</dbReference>
<gene>
    <name evidence="1" type="primary">trpA</name>
    <name type="ordered locus">CT0535</name>
</gene>
<sequence>MKENRITRLVKQDKKLLIAYYMPEFPVPGATLPVLEALQESGVDLIELGMPYSDPIGDGSVIQDAAHKAISHGVHVGSIFELVRRARNGEGCKKITTPILLMGYCNPLIAYGGDCFMADAVKAGVDGLLIPDLPPEESEDFLERAKHFGLSVIYLISPVTPPDRIELIDSMSTDFSYCLAVNATTGTGKLDVAGMDEKIAEYLKRVRQHTKKKFVVGFGIKDRERVRKMWELADGAVVGSALLQHVATAKTPEETAELAAGFWKSLR</sequence>
<name>TRPA_CHLTE</name>
<evidence type="ECO:0000255" key="1">
    <source>
        <dbReference type="HAMAP-Rule" id="MF_00131"/>
    </source>
</evidence>
<feature type="chain" id="PRO_0000098767" description="Tryptophan synthase alpha chain">
    <location>
        <begin position="1"/>
        <end position="267"/>
    </location>
</feature>
<feature type="active site" description="Proton acceptor" evidence="1">
    <location>
        <position position="47"/>
    </location>
</feature>
<feature type="active site" description="Proton acceptor" evidence="1">
    <location>
        <position position="58"/>
    </location>
</feature>
<proteinExistence type="inferred from homology"/>
<reference key="1">
    <citation type="journal article" date="2002" name="Proc. Natl. Acad. Sci. U.S.A.">
        <title>The complete genome sequence of Chlorobium tepidum TLS, a photosynthetic, anaerobic, green-sulfur bacterium.</title>
        <authorList>
            <person name="Eisen J.A."/>
            <person name="Nelson K.E."/>
            <person name="Paulsen I.T."/>
            <person name="Heidelberg J.F."/>
            <person name="Wu M."/>
            <person name="Dodson R.J."/>
            <person name="DeBoy R.T."/>
            <person name="Gwinn M.L."/>
            <person name="Nelson W.C."/>
            <person name="Haft D.H."/>
            <person name="Hickey E.K."/>
            <person name="Peterson J.D."/>
            <person name="Durkin A.S."/>
            <person name="Kolonay J.F."/>
            <person name="Yang F."/>
            <person name="Holt I.E."/>
            <person name="Umayam L.A."/>
            <person name="Mason T.M."/>
            <person name="Brenner M."/>
            <person name="Shea T.P."/>
            <person name="Parksey D.S."/>
            <person name="Nierman W.C."/>
            <person name="Feldblyum T.V."/>
            <person name="Hansen C.L."/>
            <person name="Craven M.B."/>
            <person name="Radune D."/>
            <person name="Vamathevan J.J."/>
            <person name="Khouri H.M."/>
            <person name="White O."/>
            <person name="Gruber T.M."/>
            <person name="Ketchum K.A."/>
            <person name="Venter J.C."/>
            <person name="Tettelin H."/>
            <person name="Bryant D.A."/>
            <person name="Fraser C.M."/>
        </authorList>
    </citation>
    <scope>NUCLEOTIDE SEQUENCE [LARGE SCALE GENOMIC DNA]</scope>
    <source>
        <strain>ATCC 49652 / DSM 12025 / NBRC 103806 / TLS</strain>
    </source>
</reference>
<organism>
    <name type="scientific">Chlorobaculum tepidum (strain ATCC 49652 / DSM 12025 / NBRC 103806 / TLS)</name>
    <name type="common">Chlorobium tepidum</name>
    <dbReference type="NCBI Taxonomy" id="194439"/>
    <lineage>
        <taxon>Bacteria</taxon>
        <taxon>Pseudomonadati</taxon>
        <taxon>Chlorobiota</taxon>
        <taxon>Chlorobiia</taxon>
        <taxon>Chlorobiales</taxon>
        <taxon>Chlorobiaceae</taxon>
        <taxon>Chlorobaculum</taxon>
    </lineage>
</organism>
<comment type="function">
    <text evidence="1">The alpha subunit is responsible for the aldol cleavage of indoleglycerol phosphate to indole and glyceraldehyde 3-phosphate.</text>
</comment>
<comment type="catalytic activity">
    <reaction evidence="1">
        <text>(1S,2R)-1-C-(indol-3-yl)glycerol 3-phosphate + L-serine = D-glyceraldehyde 3-phosphate + L-tryptophan + H2O</text>
        <dbReference type="Rhea" id="RHEA:10532"/>
        <dbReference type="ChEBI" id="CHEBI:15377"/>
        <dbReference type="ChEBI" id="CHEBI:33384"/>
        <dbReference type="ChEBI" id="CHEBI:57912"/>
        <dbReference type="ChEBI" id="CHEBI:58866"/>
        <dbReference type="ChEBI" id="CHEBI:59776"/>
        <dbReference type="EC" id="4.2.1.20"/>
    </reaction>
</comment>
<comment type="pathway">
    <text evidence="1">Amino-acid biosynthesis; L-tryptophan biosynthesis; L-tryptophan from chorismate: step 5/5.</text>
</comment>
<comment type="subunit">
    <text evidence="1">Tetramer of two alpha and two beta chains.</text>
</comment>
<comment type="similarity">
    <text evidence="1">Belongs to the TrpA family.</text>
</comment>